<accession>B8DHB3</accession>
<reference key="1">
    <citation type="journal article" date="2011" name="J. Bacteriol.">
        <title>Genome sequence of lineage III Listeria monocytogenes strain HCC23.</title>
        <authorList>
            <person name="Steele C.L."/>
            <person name="Donaldson J.R."/>
            <person name="Paul D."/>
            <person name="Banes M.M."/>
            <person name="Arick T."/>
            <person name="Bridges S.M."/>
            <person name="Lawrence M.L."/>
        </authorList>
    </citation>
    <scope>NUCLEOTIDE SEQUENCE [LARGE SCALE GENOMIC DNA]</scope>
    <source>
        <strain>HCC23</strain>
    </source>
</reference>
<proteinExistence type="inferred from homology"/>
<gene>
    <name evidence="1" type="primary">trpF</name>
    <name type="ordered locus">LMHCC_0933</name>
</gene>
<protein>
    <recommendedName>
        <fullName evidence="1">N-(5'-phosphoribosyl)anthranilate isomerase</fullName>
        <shortName evidence="1">PRAI</shortName>
        <ecNumber evidence="1">5.3.1.24</ecNumber>
    </recommendedName>
</protein>
<organism>
    <name type="scientific">Listeria monocytogenes serotype 4a (strain HCC23)</name>
    <dbReference type="NCBI Taxonomy" id="552536"/>
    <lineage>
        <taxon>Bacteria</taxon>
        <taxon>Bacillati</taxon>
        <taxon>Bacillota</taxon>
        <taxon>Bacilli</taxon>
        <taxon>Bacillales</taxon>
        <taxon>Listeriaceae</taxon>
        <taxon>Listeria</taxon>
    </lineage>
</organism>
<comment type="catalytic activity">
    <reaction evidence="1">
        <text>N-(5-phospho-beta-D-ribosyl)anthranilate = 1-(2-carboxyphenylamino)-1-deoxy-D-ribulose 5-phosphate</text>
        <dbReference type="Rhea" id="RHEA:21540"/>
        <dbReference type="ChEBI" id="CHEBI:18277"/>
        <dbReference type="ChEBI" id="CHEBI:58613"/>
        <dbReference type="EC" id="5.3.1.24"/>
    </reaction>
</comment>
<comment type="pathway">
    <text evidence="1">Amino-acid biosynthesis; L-tryptophan biosynthesis; L-tryptophan from chorismate: step 3/5.</text>
</comment>
<comment type="similarity">
    <text evidence="1">Belongs to the TrpF family.</text>
</comment>
<dbReference type="EC" id="5.3.1.24" evidence="1"/>
<dbReference type="EMBL" id="CP001175">
    <property type="protein sequence ID" value="ACK39282.1"/>
    <property type="molecule type" value="Genomic_DNA"/>
</dbReference>
<dbReference type="RefSeq" id="WP_012581227.1">
    <property type="nucleotide sequence ID" value="NC_011660.1"/>
</dbReference>
<dbReference type="SMR" id="B8DHB3"/>
<dbReference type="KEGG" id="lmh:LMHCC_0933"/>
<dbReference type="HOGENOM" id="CLU_076364_1_0_9"/>
<dbReference type="UniPathway" id="UPA00035">
    <property type="reaction ID" value="UER00042"/>
</dbReference>
<dbReference type="GO" id="GO:0004640">
    <property type="term" value="F:phosphoribosylanthranilate isomerase activity"/>
    <property type="evidence" value="ECO:0007669"/>
    <property type="project" value="UniProtKB-UniRule"/>
</dbReference>
<dbReference type="GO" id="GO:0000162">
    <property type="term" value="P:L-tryptophan biosynthetic process"/>
    <property type="evidence" value="ECO:0007669"/>
    <property type="project" value="UniProtKB-UniRule"/>
</dbReference>
<dbReference type="CDD" id="cd00405">
    <property type="entry name" value="PRAI"/>
    <property type="match status" value="1"/>
</dbReference>
<dbReference type="FunFam" id="3.20.20.70:FF:000075">
    <property type="entry name" value="Tryptophan biosynthesis protein TRP1"/>
    <property type="match status" value="1"/>
</dbReference>
<dbReference type="Gene3D" id="3.20.20.70">
    <property type="entry name" value="Aldolase class I"/>
    <property type="match status" value="1"/>
</dbReference>
<dbReference type="HAMAP" id="MF_00135">
    <property type="entry name" value="PRAI"/>
    <property type="match status" value="1"/>
</dbReference>
<dbReference type="InterPro" id="IPR013785">
    <property type="entry name" value="Aldolase_TIM"/>
</dbReference>
<dbReference type="InterPro" id="IPR001240">
    <property type="entry name" value="PRAI_dom"/>
</dbReference>
<dbReference type="InterPro" id="IPR011060">
    <property type="entry name" value="RibuloseP-bd_barrel"/>
</dbReference>
<dbReference type="InterPro" id="IPR044643">
    <property type="entry name" value="TrpF_fam"/>
</dbReference>
<dbReference type="NCBIfam" id="NF002300">
    <property type="entry name" value="PRK01222.1-7"/>
    <property type="match status" value="1"/>
</dbReference>
<dbReference type="PANTHER" id="PTHR42894">
    <property type="entry name" value="N-(5'-PHOSPHORIBOSYL)ANTHRANILATE ISOMERASE"/>
    <property type="match status" value="1"/>
</dbReference>
<dbReference type="PANTHER" id="PTHR42894:SF1">
    <property type="entry name" value="N-(5'-PHOSPHORIBOSYL)ANTHRANILATE ISOMERASE"/>
    <property type="match status" value="1"/>
</dbReference>
<dbReference type="Pfam" id="PF00697">
    <property type="entry name" value="PRAI"/>
    <property type="match status" value="1"/>
</dbReference>
<dbReference type="SUPFAM" id="SSF51366">
    <property type="entry name" value="Ribulose-phoshate binding barrel"/>
    <property type="match status" value="1"/>
</dbReference>
<feature type="chain" id="PRO_1000197107" description="N-(5'-phosphoribosyl)anthranilate isomerase">
    <location>
        <begin position="1"/>
        <end position="202"/>
    </location>
</feature>
<evidence type="ECO:0000255" key="1">
    <source>
        <dbReference type="HAMAP-Rule" id="MF_00135"/>
    </source>
</evidence>
<keyword id="KW-0028">Amino-acid biosynthesis</keyword>
<keyword id="KW-0057">Aromatic amino acid biosynthesis</keyword>
<keyword id="KW-0413">Isomerase</keyword>
<keyword id="KW-0822">Tryptophan biosynthesis</keyword>
<name>TRPF_LISMH</name>
<sequence>MIVKICGLKKAVDVAAAVDNGADMIGFVFAKSKRQVTVEKAHELAKNIPANVKKVGVFVNPTEEELMAAIKGVPLDIVQLHGQEPAKQANRTDAEVIKAFPVKDGKIPTNINDYPNAYILLDAPAEEYEGGSGKTFDWDKINRDMLTKNKLIIAGGLNAQNVQEAIKRFEPYAVDISSGVETNGEKDPEKIKCFIKTAKGVE</sequence>